<accession>P27397</accession>
<name>HSP12_DAUCA</name>
<protein>
    <recommendedName>
        <fullName>18.0 kDa class I heat shock protein</fullName>
    </recommendedName>
    <alternativeName>
        <fullName>Clone DCHSP17.9</fullName>
    </alternativeName>
</protein>
<keyword id="KW-0963">Cytoplasm</keyword>
<keyword id="KW-0346">Stress response</keyword>
<reference key="1">
    <citation type="journal article" date="1991" name="Plant Mol. Biol.">
        <title>Cloning and characterization of genes encoding low molecular weight heat shock proteins from carrot.</title>
        <authorList>
            <person name="Darwish K."/>
            <person name="Wang L."/>
            <person name="Hwang C.H."/>
            <person name="Apuya N."/>
            <person name="Zimmerman J.L."/>
        </authorList>
    </citation>
    <scope>NUCLEOTIDE SEQUENCE [GENOMIC DNA]</scope>
    <source>
        <strain>cv. Danvers Half-long</strain>
    </source>
</reference>
<organism>
    <name type="scientific">Daucus carota</name>
    <name type="common">Wild carrot</name>
    <dbReference type="NCBI Taxonomy" id="4039"/>
    <lineage>
        <taxon>Eukaryota</taxon>
        <taxon>Viridiplantae</taxon>
        <taxon>Streptophyta</taxon>
        <taxon>Embryophyta</taxon>
        <taxon>Tracheophyta</taxon>
        <taxon>Spermatophyta</taxon>
        <taxon>Magnoliopsida</taxon>
        <taxon>eudicotyledons</taxon>
        <taxon>Gunneridae</taxon>
        <taxon>Pentapetalae</taxon>
        <taxon>asterids</taxon>
        <taxon>campanulids</taxon>
        <taxon>Apiales</taxon>
        <taxon>Apiaceae</taxon>
        <taxon>Apioideae</taxon>
        <taxon>Scandiceae</taxon>
        <taxon>Daucinae</taxon>
        <taxon>Daucus</taxon>
        <taxon>Daucus sect. Daucus</taxon>
    </lineage>
</organism>
<feature type="chain" id="PRO_0000125975" description="18.0 kDa class I heat shock protein">
    <location>
        <begin position="1"/>
        <end position="159"/>
    </location>
</feature>
<feature type="domain" description="sHSP" evidence="1">
    <location>
        <begin position="45"/>
        <end position="159"/>
    </location>
</feature>
<proteinExistence type="inferred from homology"/>
<sequence length="159" mass="18032">MSIIPSFFGSRRSNVLNPFSLDIWDPFQDYPLITSSGTSSEFGKETAAFANTHIDWKETPQAHVFKADLPGLKKEEVKVEVEEGKVLQISGERNKEKEEKNNKWHRVEFSSGKFLRRFRLPENANVDEVKAGMENGVLTVTVPKVEMKKPEVKSIHISG</sequence>
<evidence type="ECO:0000255" key="1">
    <source>
        <dbReference type="PROSITE-ProRule" id="PRU00285"/>
    </source>
</evidence>
<dbReference type="EMBL" id="X53852">
    <property type="protein sequence ID" value="CAA37848.1"/>
    <property type="molecule type" value="Genomic_DNA"/>
</dbReference>
<dbReference type="PIR" id="S15000">
    <property type="entry name" value="CYPZ79"/>
</dbReference>
<dbReference type="SMR" id="P27397"/>
<dbReference type="GO" id="GO:0005737">
    <property type="term" value="C:cytoplasm"/>
    <property type="evidence" value="ECO:0007669"/>
    <property type="project" value="UniProtKB-SubCell"/>
</dbReference>
<dbReference type="CDD" id="cd06472">
    <property type="entry name" value="ACD_ScHsp26_like"/>
    <property type="match status" value="1"/>
</dbReference>
<dbReference type="FunFam" id="2.60.40.790:FF:000009">
    <property type="entry name" value="17.6 kDa class I heat shock protein-like"/>
    <property type="match status" value="1"/>
</dbReference>
<dbReference type="Gene3D" id="2.60.40.790">
    <property type="match status" value="1"/>
</dbReference>
<dbReference type="InterPro" id="IPR002068">
    <property type="entry name" value="A-crystallin/Hsp20_dom"/>
</dbReference>
<dbReference type="InterPro" id="IPR008978">
    <property type="entry name" value="HSP20-like_chaperone"/>
</dbReference>
<dbReference type="InterPro" id="IPR031107">
    <property type="entry name" value="Small_HSP"/>
</dbReference>
<dbReference type="PANTHER" id="PTHR11527">
    <property type="entry name" value="HEAT-SHOCK PROTEIN 20 FAMILY MEMBER"/>
    <property type="match status" value="1"/>
</dbReference>
<dbReference type="Pfam" id="PF00011">
    <property type="entry name" value="HSP20"/>
    <property type="match status" value="1"/>
</dbReference>
<dbReference type="SUPFAM" id="SSF49764">
    <property type="entry name" value="HSP20-like chaperones"/>
    <property type="match status" value="1"/>
</dbReference>
<dbReference type="PROSITE" id="PS01031">
    <property type="entry name" value="SHSP"/>
    <property type="match status" value="1"/>
</dbReference>
<comment type="subunit">
    <text>Forms oligomeric structures.</text>
</comment>
<comment type="subcellular location">
    <subcellularLocation>
        <location>Cytoplasm</location>
    </subcellularLocation>
</comment>
<comment type="similarity">
    <text evidence="1">Belongs to the small heat shock protein (HSP20) family.</text>
</comment>